<proteinExistence type="evidence at transcript level"/>
<protein>
    <recommendedName>
        <fullName>Transcription factor MYB104</fullName>
    </recommendedName>
    <alternativeName>
        <fullName>Myb-related protein 104</fullName>
        <shortName>AtMYB104</shortName>
    </alternativeName>
</protein>
<name>MY104_ARATH</name>
<dbReference type="EMBL" id="U26934">
    <property type="protein sequence ID" value="AAF13101.1"/>
    <property type="status" value="ALT_SEQ"/>
    <property type="molecule type" value="Genomic_DNA"/>
</dbReference>
<dbReference type="EMBL" id="AC005168">
    <property type="protein sequence ID" value="AAM15011.1"/>
    <property type="status" value="ALT_SEQ"/>
    <property type="molecule type" value="Genomic_DNA"/>
</dbReference>
<dbReference type="EMBL" id="AC005623">
    <property type="protein sequence ID" value="AAF18614.1"/>
    <property type="status" value="ALT_SEQ"/>
    <property type="molecule type" value="Genomic_DNA"/>
</dbReference>
<dbReference type="EMBL" id="CP002685">
    <property type="protein sequence ID" value="AEC07910.1"/>
    <property type="molecule type" value="Genomic_DNA"/>
</dbReference>
<dbReference type="EMBL" id="DR750464">
    <property type="status" value="NOT_ANNOTATED_CDS"/>
    <property type="molecule type" value="mRNA"/>
</dbReference>
<dbReference type="PIR" id="H84666">
    <property type="entry name" value="H84666"/>
</dbReference>
<dbReference type="PIR" id="T02640">
    <property type="entry name" value="T02640"/>
</dbReference>
<dbReference type="RefSeq" id="NP_180263.5">
    <property type="nucleotide sequence ID" value="NM_128252.6"/>
</dbReference>
<dbReference type="SMR" id="Q9SM27"/>
<dbReference type="BioGRID" id="2588">
    <property type="interactions" value="1"/>
</dbReference>
<dbReference type="STRING" id="3702.Q9SM27"/>
<dbReference type="PaxDb" id="3702-AT2G26950.1"/>
<dbReference type="EnsemblPlants" id="AT2G26950.1">
    <property type="protein sequence ID" value="AT2G26950.1"/>
    <property type="gene ID" value="AT2G26950"/>
</dbReference>
<dbReference type="GeneID" id="817236"/>
<dbReference type="Gramene" id="AT2G26950.1">
    <property type="protein sequence ID" value="AT2G26950.1"/>
    <property type="gene ID" value="AT2G26950"/>
</dbReference>
<dbReference type="KEGG" id="ath:AT2G26950"/>
<dbReference type="Araport" id="AT2G26950"/>
<dbReference type="TAIR" id="AT2G26950">
    <property type="gene designation" value="MYB104"/>
</dbReference>
<dbReference type="eggNOG" id="KOG0048">
    <property type="taxonomic scope" value="Eukaryota"/>
</dbReference>
<dbReference type="HOGENOM" id="CLU_034691_0_0_1"/>
<dbReference type="InParanoid" id="Q9SM27"/>
<dbReference type="OMA" id="WNARRMR"/>
<dbReference type="PRO" id="PR:Q9SM27"/>
<dbReference type="Proteomes" id="UP000006548">
    <property type="component" value="Chromosome 2"/>
</dbReference>
<dbReference type="ExpressionAtlas" id="Q9SM27">
    <property type="expression patterns" value="baseline and differential"/>
</dbReference>
<dbReference type="GO" id="GO:0005634">
    <property type="term" value="C:nucleus"/>
    <property type="evidence" value="ECO:0007669"/>
    <property type="project" value="UniProtKB-SubCell"/>
</dbReference>
<dbReference type="GO" id="GO:0003677">
    <property type="term" value="F:DNA binding"/>
    <property type="evidence" value="ECO:0007669"/>
    <property type="project" value="UniProtKB-KW"/>
</dbReference>
<dbReference type="GO" id="GO:0003700">
    <property type="term" value="F:DNA-binding transcription factor activity"/>
    <property type="evidence" value="ECO:0000250"/>
    <property type="project" value="TAIR"/>
</dbReference>
<dbReference type="GO" id="GO:0006355">
    <property type="term" value="P:regulation of DNA-templated transcription"/>
    <property type="evidence" value="ECO:0000304"/>
    <property type="project" value="TAIR"/>
</dbReference>
<dbReference type="CDD" id="cd00167">
    <property type="entry name" value="SANT"/>
    <property type="match status" value="2"/>
</dbReference>
<dbReference type="FunFam" id="1.10.10.60:FF:000449">
    <property type="entry name" value="MYB-related transcription factor"/>
    <property type="match status" value="1"/>
</dbReference>
<dbReference type="Gene3D" id="1.10.10.60">
    <property type="entry name" value="Homeodomain-like"/>
    <property type="match status" value="2"/>
</dbReference>
<dbReference type="InterPro" id="IPR009057">
    <property type="entry name" value="Homeodomain-like_sf"/>
</dbReference>
<dbReference type="InterPro" id="IPR017930">
    <property type="entry name" value="Myb_dom"/>
</dbReference>
<dbReference type="InterPro" id="IPR001005">
    <property type="entry name" value="SANT/Myb"/>
</dbReference>
<dbReference type="PANTHER" id="PTHR47995:SF6">
    <property type="entry name" value="MYB DOMAIN PROTEIN 81-RELATED"/>
    <property type="match status" value="1"/>
</dbReference>
<dbReference type="PANTHER" id="PTHR47995">
    <property type="entry name" value="TRANSCRIPTION FACTOR MYB33-RELATED"/>
    <property type="match status" value="1"/>
</dbReference>
<dbReference type="Pfam" id="PF00249">
    <property type="entry name" value="Myb_DNA-binding"/>
    <property type="match status" value="2"/>
</dbReference>
<dbReference type="SMART" id="SM00717">
    <property type="entry name" value="SANT"/>
    <property type="match status" value="2"/>
</dbReference>
<dbReference type="SUPFAM" id="SSF46689">
    <property type="entry name" value="Homeodomain-like"/>
    <property type="match status" value="1"/>
</dbReference>
<dbReference type="PROSITE" id="PS51294">
    <property type="entry name" value="HTH_MYB"/>
    <property type="match status" value="2"/>
</dbReference>
<gene>
    <name type="primary">MYB104</name>
    <name type="ordered locus">At2g26950</name>
    <name type="ORF">T20P8.20</name>
</gene>
<accession>Q9SM27</accession>
<accession>F4IVM2</accession>
<accession>Q9SLH2</accession>
<comment type="subcellular location">
    <subcellularLocation>
        <location evidence="1">Nucleus</location>
    </subcellularLocation>
</comment>
<comment type="sequence caution" evidence="3">
    <conflict type="erroneous gene model prediction">
        <sequence resource="EMBL-CDS" id="AAF13101"/>
    </conflict>
</comment>
<comment type="sequence caution" evidence="3">
    <conflict type="erroneous gene model prediction">
        <sequence resource="EMBL-CDS" id="AAF18614"/>
    </conflict>
</comment>
<comment type="sequence caution" evidence="3">
    <conflict type="erroneous initiation">
        <sequence resource="EMBL-CDS" id="AAF18614"/>
    </conflict>
    <text>Truncated N-terminus.</text>
</comment>
<comment type="sequence caution" evidence="3">
    <conflict type="erroneous gene model prediction">
        <sequence resource="EMBL-CDS" id="AAM15011"/>
    </conflict>
</comment>
<comment type="sequence caution" evidence="3">
    <conflict type="erroneous initiation">
        <sequence resource="EMBL-CDS" id="AAM15011"/>
    </conflict>
    <text>Truncated N-terminus.</text>
</comment>
<evidence type="ECO:0000255" key="1">
    <source>
        <dbReference type="PROSITE-ProRule" id="PRU00625"/>
    </source>
</evidence>
<evidence type="ECO:0000256" key="2">
    <source>
        <dbReference type="SAM" id="MobiDB-lite"/>
    </source>
</evidence>
<evidence type="ECO:0000305" key="3"/>
<feature type="chain" id="PRO_0000358835" description="Transcription factor MYB104">
    <location>
        <begin position="1"/>
        <end position="382"/>
    </location>
</feature>
<feature type="domain" description="HTH myb-type 1" evidence="1">
    <location>
        <begin position="13"/>
        <end position="69"/>
    </location>
</feature>
<feature type="domain" description="HTH myb-type 2" evidence="1">
    <location>
        <begin position="70"/>
        <end position="120"/>
    </location>
</feature>
<feature type="DNA-binding region" description="H-T-H motif" evidence="1">
    <location>
        <begin position="41"/>
        <end position="65"/>
    </location>
</feature>
<feature type="DNA-binding region" description="H-T-H motif" evidence="1">
    <location>
        <begin position="93"/>
        <end position="116"/>
    </location>
</feature>
<feature type="region of interest" description="Disordered" evidence="2">
    <location>
        <begin position="326"/>
        <end position="364"/>
    </location>
</feature>
<feature type="compositionally biased region" description="Polar residues" evidence="2">
    <location>
        <begin position="329"/>
        <end position="343"/>
    </location>
</feature>
<feature type="compositionally biased region" description="Polar residues" evidence="2">
    <location>
        <begin position="352"/>
        <end position="364"/>
    </location>
</feature>
<feature type="sequence conflict" description="In Ref. 1; AAF13101." evidence="3" ref="1">
    <original>F</original>
    <variation>L</variation>
    <location>
        <position position="100"/>
    </location>
</feature>
<feature type="sequence conflict" description="In Ref. 1; AAF13101." evidence="3" ref="1">
    <original>T</original>
    <variation>M</variation>
    <location>
        <position position="184"/>
    </location>
</feature>
<feature type="sequence conflict" description="In Ref. 1; AAF13101." evidence="3" ref="1">
    <original>R</original>
    <variation>L</variation>
    <location>
        <position position="343"/>
    </location>
</feature>
<keyword id="KW-0238">DNA-binding</keyword>
<keyword id="KW-0539">Nucleus</keyword>
<keyword id="KW-1185">Reference proteome</keyword>
<keyword id="KW-0677">Repeat</keyword>
<keyword id="KW-0804">Transcription</keyword>
<keyword id="KW-0805">Transcription regulation</keyword>
<sequence length="382" mass="43513">MIQDQANDLLAMKKTFTKSKWKPEEDRILKDYVIQYGDRTWTHVPKRTGLPHNPASCRFRWMNHLKPSLKKGPFTDEEEKRVLQLHAVLGNKWSQMAREFPGRTDNEIKNFWNARRMRLKGKGLPVYPDEVREQAIRTAAQYGVKVELLNAHYSQDSLMAGNVEKPQELNNLALNQCSPYYQSTLANVQPSRNRVMEPETTFPFTGGSAMNEQNPTLLCNPYVESTQEQLPDSHLFGNVTYSSPPMPLIHEVENLELPSFQGFDFHEEPSSFGAEQYNPMLNLEPHNTLVQSPLIGQTPTDFPSSFYDELLDELLESVVNGSLGEIPKTDTSSESQLFQSSLRSHTDATPDIANTTGYVGSNERNTTNDDDWIRLLLDEGFI</sequence>
<reference key="1">
    <citation type="online journal article" date="1999" name="Plant Gene Register">
        <title>Cloning of three MYB-like genes from Arabidopsis thaliana.</title>
        <authorList>
            <person name="Li S.F."/>
            <person name="Heazlewood J."/>
            <person name="Parish R.W."/>
        </authorList>
        <locator>PGR99-138</locator>
    </citation>
    <scope>NUCLEOTIDE SEQUENCE [GENOMIC DNA]</scope>
    <source>
        <strain>cv. Landsberg erecta</strain>
    </source>
</reference>
<reference key="2">
    <citation type="journal article" date="1999" name="Nature">
        <title>Sequence and analysis of chromosome 2 of the plant Arabidopsis thaliana.</title>
        <authorList>
            <person name="Lin X."/>
            <person name="Kaul S."/>
            <person name="Rounsley S.D."/>
            <person name="Shea T.P."/>
            <person name="Benito M.-I."/>
            <person name="Town C.D."/>
            <person name="Fujii C.Y."/>
            <person name="Mason T.M."/>
            <person name="Bowman C.L."/>
            <person name="Barnstead M.E."/>
            <person name="Feldblyum T.V."/>
            <person name="Buell C.R."/>
            <person name="Ketchum K.A."/>
            <person name="Lee J.J."/>
            <person name="Ronning C.M."/>
            <person name="Koo H.L."/>
            <person name="Moffat K.S."/>
            <person name="Cronin L.A."/>
            <person name="Shen M."/>
            <person name="Pai G."/>
            <person name="Van Aken S."/>
            <person name="Umayam L."/>
            <person name="Tallon L.J."/>
            <person name="Gill J.E."/>
            <person name="Adams M.D."/>
            <person name="Carrera A.J."/>
            <person name="Creasy T.H."/>
            <person name="Goodman H.M."/>
            <person name="Somerville C.R."/>
            <person name="Copenhaver G.P."/>
            <person name="Preuss D."/>
            <person name="Nierman W.C."/>
            <person name="White O."/>
            <person name="Eisen J.A."/>
            <person name="Salzberg S.L."/>
            <person name="Fraser C.M."/>
            <person name="Venter J.C."/>
        </authorList>
    </citation>
    <scope>NUCLEOTIDE SEQUENCE [LARGE SCALE GENOMIC DNA]</scope>
    <source>
        <strain>cv. Columbia</strain>
    </source>
</reference>
<reference key="3">
    <citation type="journal article" date="2017" name="Plant J.">
        <title>Araport11: a complete reannotation of the Arabidopsis thaliana reference genome.</title>
        <authorList>
            <person name="Cheng C.Y."/>
            <person name="Krishnakumar V."/>
            <person name="Chan A.P."/>
            <person name="Thibaud-Nissen F."/>
            <person name="Schobel S."/>
            <person name="Town C.D."/>
        </authorList>
    </citation>
    <scope>GENOME REANNOTATION</scope>
    <source>
        <strain>cv. Columbia</strain>
    </source>
</reference>
<reference key="4">
    <citation type="journal article" date="2002" name="Comp. Funct. Genomics">
        <title>REGIA, an EU project on functional genomics of transcription factors from Arabidopsis thaliana.</title>
        <authorList>
            <consortium name="Regia Consortium"/>
            <person name="Paz-Ares J."/>
        </authorList>
    </citation>
    <scope>NUCLEOTIDE SEQUENCE [LARGE SCALE MRNA] OF 1-244</scope>
</reference>
<reference key="5">
    <citation type="journal article" date="2001" name="Curr. Opin. Plant Biol.">
        <title>The R2R3-MYB gene family in Arabidopsis thaliana.</title>
        <authorList>
            <person name="Stracke R."/>
            <person name="Werber M."/>
            <person name="Weisshaar B."/>
        </authorList>
    </citation>
    <scope>GENE FAMILY</scope>
    <scope>NOMENCLATURE</scope>
</reference>
<reference key="6">
    <citation type="journal article" date="2006" name="Plant Mol. Biol.">
        <title>The MYB transcription factor superfamily of Arabidopsis: expression analysis and phylogenetic comparison with the rice MYB family.</title>
        <authorList>
            <person name="Chen Y."/>
            <person name="Yang X."/>
            <person name="He K."/>
            <person name="Liu M."/>
            <person name="Li J."/>
            <person name="Gao Z."/>
            <person name="Lin Z."/>
            <person name="Zhang Y."/>
            <person name="Wang X."/>
            <person name="Qiu X."/>
            <person name="Shen Y."/>
            <person name="Zhang L."/>
            <person name="Deng X."/>
            <person name="Luo J."/>
            <person name="Deng X.-W."/>
            <person name="Chen Z."/>
            <person name="Gu H."/>
            <person name="Qu L.-J."/>
        </authorList>
    </citation>
    <scope>GENE FAMILY</scope>
</reference>
<organism>
    <name type="scientific">Arabidopsis thaliana</name>
    <name type="common">Mouse-ear cress</name>
    <dbReference type="NCBI Taxonomy" id="3702"/>
    <lineage>
        <taxon>Eukaryota</taxon>
        <taxon>Viridiplantae</taxon>
        <taxon>Streptophyta</taxon>
        <taxon>Embryophyta</taxon>
        <taxon>Tracheophyta</taxon>
        <taxon>Spermatophyta</taxon>
        <taxon>Magnoliopsida</taxon>
        <taxon>eudicotyledons</taxon>
        <taxon>Gunneridae</taxon>
        <taxon>Pentapetalae</taxon>
        <taxon>rosids</taxon>
        <taxon>malvids</taxon>
        <taxon>Brassicales</taxon>
        <taxon>Brassicaceae</taxon>
        <taxon>Camelineae</taxon>
        <taxon>Arabidopsis</taxon>
    </lineage>
</organism>